<reference key="1">
    <citation type="submission" date="2006-08" db="EMBL/GenBank/DDBJ databases">
        <title>Complete sequence of chromosome 1 of Burkholderia cenocepacia HI2424.</title>
        <authorList>
            <person name="Copeland A."/>
            <person name="Lucas S."/>
            <person name="Lapidus A."/>
            <person name="Barry K."/>
            <person name="Detter J.C."/>
            <person name="Glavina del Rio T."/>
            <person name="Hammon N."/>
            <person name="Israni S."/>
            <person name="Pitluck S."/>
            <person name="Chain P."/>
            <person name="Malfatti S."/>
            <person name="Shin M."/>
            <person name="Vergez L."/>
            <person name="Schmutz J."/>
            <person name="Larimer F."/>
            <person name="Land M."/>
            <person name="Hauser L."/>
            <person name="Kyrpides N."/>
            <person name="Kim E."/>
            <person name="LiPuma J.J."/>
            <person name="Gonzalez C.F."/>
            <person name="Konstantinidis K."/>
            <person name="Tiedje J.M."/>
            <person name="Richardson P."/>
        </authorList>
    </citation>
    <scope>NUCLEOTIDE SEQUENCE [LARGE SCALE GENOMIC DNA]</scope>
    <source>
        <strain>HI2424</strain>
    </source>
</reference>
<comment type="function">
    <text evidence="1">Carrier of the growing fatty acid chain in fatty acid biosynthesis.</text>
</comment>
<comment type="pathway">
    <text evidence="1">Lipid metabolism; fatty acid biosynthesis.</text>
</comment>
<comment type="subcellular location">
    <subcellularLocation>
        <location evidence="1">Cytoplasm</location>
    </subcellularLocation>
</comment>
<comment type="PTM">
    <text evidence="1">4'-phosphopantetheine is transferred from CoA to a specific serine of apo-ACP by AcpS. This modification is essential for activity because fatty acids are bound in thioester linkage to the sulfhydryl of the prosthetic group.</text>
</comment>
<comment type="similarity">
    <text evidence="1">Belongs to the acyl carrier protein (ACP) family.</text>
</comment>
<gene>
    <name evidence="1" type="primary">acpP</name>
    <name type="ordered locus">Bcen2424_1124</name>
</gene>
<feature type="chain" id="PRO_1000066570" description="Acyl carrier protein">
    <location>
        <begin position="1"/>
        <end position="79"/>
    </location>
</feature>
<feature type="domain" description="Carrier" evidence="2">
    <location>
        <begin position="2"/>
        <end position="77"/>
    </location>
</feature>
<feature type="modified residue" description="O-(pantetheine 4'-phosphoryl)serine" evidence="2">
    <location>
        <position position="37"/>
    </location>
</feature>
<organism>
    <name type="scientific">Burkholderia cenocepacia (strain HI2424)</name>
    <dbReference type="NCBI Taxonomy" id="331272"/>
    <lineage>
        <taxon>Bacteria</taxon>
        <taxon>Pseudomonadati</taxon>
        <taxon>Pseudomonadota</taxon>
        <taxon>Betaproteobacteria</taxon>
        <taxon>Burkholderiales</taxon>
        <taxon>Burkholderiaceae</taxon>
        <taxon>Burkholderia</taxon>
        <taxon>Burkholderia cepacia complex</taxon>
    </lineage>
</organism>
<evidence type="ECO:0000255" key="1">
    <source>
        <dbReference type="HAMAP-Rule" id="MF_01217"/>
    </source>
</evidence>
<evidence type="ECO:0000255" key="2">
    <source>
        <dbReference type="PROSITE-ProRule" id="PRU00258"/>
    </source>
</evidence>
<dbReference type="EMBL" id="CP000458">
    <property type="protein sequence ID" value="ABK07876.1"/>
    <property type="molecule type" value="Genomic_DNA"/>
</dbReference>
<dbReference type="RefSeq" id="WP_004197638.1">
    <property type="nucleotide sequence ID" value="NC_008542.1"/>
</dbReference>
<dbReference type="SMR" id="A0K5U9"/>
<dbReference type="GeneID" id="98102461"/>
<dbReference type="KEGG" id="bch:Bcen2424_1124"/>
<dbReference type="HOGENOM" id="CLU_108696_5_1_4"/>
<dbReference type="UniPathway" id="UPA00094"/>
<dbReference type="GO" id="GO:0005829">
    <property type="term" value="C:cytosol"/>
    <property type="evidence" value="ECO:0007669"/>
    <property type="project" value="TreeGrafter"/>
</dbReference>
<dbReference type="GO" id="GO:0016020">
    <property type="term" value="C:membrane"/>
    <property type="evidence" value="ECO:0007669"/>
    <property type="project" value="GOC"/>
</dbReference>
<dbReference type="GO" id="GO:0000035">
    <property type="term" value="F:acyl binding"/>
    <property type="evidence" value="ECO:0007669"/>
    <property type="project" value="TreeGrafter"/>
</dbReference>
<dbReference type="GO" id="GO:0000036">
    <property type="term" value="F:acyl carrier activity"/>
    <property type="evidence" value="ECO:0007669"/>
    <property type="project" value="UniProtKB-UniRule"/>
</dbReference>
<dbReference type="GO" id="GO:0009245">
    <property type="term" value="P:lipid A biosynthetic process"/>
    <property type="evidence" value="ECO:0007669"/>
    <property type="project" value="TreeGrafter"/>
</dbReference>
<dbReference type="FunFam" id="1.10.1200.10:FF:000001">
    <property type="entry name" value="Acyl carrier protein"/>
    <property type="match status" value="1"/>
</dbReference>
<dbReference type="Gene3D" id="1.10.1200.10">
    <property type="entry name" value="ACP-like"/>
    <property type="match status" value="1"/>
</dbReference>
<dbReference type="HAMAP" id="MF_01217">
    <property type="entry name" value="Acyl_carrier"/>
    <property type="match status" value="1"/>
</dbReference>
<dbReference type="InterPro" id="IPR003231">
    <property type="entry name" value="ACP"/>
</dbReference>
<dbReference type="InterPro" id="IPR036736">
    <property type="entry name" value="ACP-like_sf"/>
</dbReference>
<dbReference type="InterPro" id="IPR009081">
    <property type="entry name" value="PP-bd_ACP"/>
</dbReference>
<dbReference type="InterPro" id="IPR006162">
    <property type="entry name" value="Ppantetheine_attach_site"/>
</dbReference>
<dbReference type="NCBIfam" id="TIGR00517">
    <property type="entry name" value="acyl_carrier"/>
    <property type="match status" value="1"/>
</dbReference>
<dbReference type="NCBIfam" id="NF002148">
    <property type="entry name" value="PRK00982.1-2"/>
    <property type="match status" value="1"/>
</dbReference>
<dbReference type="NCBIfam" id="NF002149">
    <property type="entry name" value="PRK00982.1-3"/>
    <property type="match status" value="1"/>
</dbReference>
<dbReference type="NCBIfam" id="NF002150">
    <property type="entry name" value="PRK00982.1-4"/>
    <property type="match status" value="1"/>
</dbReference>
<dbReference type="NCBIfam" id="NF002151">
    <property type="entry name" value="PRK00982.1-5"/>
    <property type="match status" value="1"/>
</dbReference>
<dbReference type="PANTHER" id="PTHR20863">
    <property type="entry name" value="ACYL CARRIER PROTEIN"/>
    <property type="match status" value="1"/>
</dbReference>
<dbReference type="PANTHER" id="PTHR20863:SF76">
    <property type="entry name" value="CARRIER DOMAIN-CONTAINING PROTEIN"/>
    <property type="match status" value="1"/>
</dbReference>
<dbReference type="Pfam" id="PF00550">
    <property type="entry name" value="PP-binding"/>
    <property type="match status" value="1"/>
</dbReference>
<dbReference type="SUPFAM" id="SSF47336">
    <property type="entry name" value="ACP-like"/>
    <property type="match status" value="1"/>
</dbReference>
<dbReference type="PROSITE" id="PS50075">
    <property type="entry name" value="CARRIER"/>
    <property type="match status" value="1"/>
</dbReference>
<dbReference type="PROSITE" id="PS00012">
    <property type="entry name" value="PHOSPHOPANTETHEINE"/>
    <property type="match status" value="1"/>
</dbReference>
<accession>A0K5U9</accession>
<sequence length="79" mass="8712">MDNIEQRVKKIVAEQLGVAEAEIKNEASFVNDLGADSLDTVELVMALEDEFGMEIPDEEAEKITTVQQAIDYARANVKA</sequence>
<proteinExistence type="inferred from homology"/>
<protein>
    <recommendedName>
        <fullName evidence="1">Acyl carrier protein</fullName>
        <shortName evidence="1">ACP</shortName>
    </recommendedName>
</protein>
<keyword id="KW-0963">Cytoplasm</keyword>
<keyword id="KW-0275">Fatty acid biosynthesis</keyword>
<keyword id="KW-0276">Fatty acid metabolism</keyword>
<keyword id="KW-0444">Lipid biosynthesis</keyword>
<keyword id="KW-0443">Lipid metabolism</keyword>
<keyword id="KW-0596">Phosphopantetheine</keyword>
<keyword id="KW-0597">Phosphoprotein</keyword>
<name>ACP_BURCH</name>